<accession>Q5PQM0</accession>
<sequence length="697" mass="79772">MCKSLRYCFSHCLYLAMTRLEEVNREVNMHSSVRYLGYLARFNLLVAICLGLYVRWEKTANSLILVIFILGLFVLGIASILYYYFSMEAASLSLSNLWFGFLLGLLCFLDNSSFKSDVKEETTKYLLLTSIVLRILCALVERLSGYVRHRPTLLTTVEFLELVGFAIASTTMLVERSLSVILLVMALAMLIIDLRMKSFLAIPNLIIFSVLLFFSSLETPQNPIAFACFFICLITDPFLDIYFSGLSVTERWKPFLYRGRICRRLSVVFTGMIELTFFTLSAFKLRDTHLWYFVIPGFSIFGIFWMICHIIFLLTLWGFHTKLNDCHKVYINHRADNNSLDRIMASKGMRHFCLISEQLVFFSLLATAILGAVSWQPTNGIFLSMFLIVLPLESMAHGLFHELGNCLGGTSVGYAIVIPTNFCSPDGQPTLLPPEHVQELNLRSTGMLNAIQRFFAYHMIETYGCDYSTSGLSFDTLHSKLKAFLELRTVDGPRHDTYVLYYSGHTHGSGEWALAGGDILRLDTLLEWWREKNGSFCSRLIIILDSENSTPWVKEVRKINDQYVAVQGAELAKTVDIEEADPPQLGDFTRDWVEYNCNSTNNICWTEKGRTVKAMYGVSKRWSDYTLHLPTGSDVAKHWMLHFPRITYPLVHLANWLCGLNLFWMCKACFRCLKRLKMSWFLPTVLDTGQGFKLVKS</sequence>
<protein>
    <recommendedName>
        <fullName>Transmembrane protein 168</fullName>
    </recommendedName>
</protein>
<dbReference type="EMBL" id="BC087124">
    <property type="protein sequence ID" value="AAH87124.1"/>
    <property type="molecule type" value="mRNA"/>
</dbReference>
<dbReference type="RefSeq" id="NP_001014076.1">
    <property type="nucleotide sequence ID" value="NM_001014054.1"/>
</dbReference>
<dbReference type="RefSeq" id="XP_017448099.1">
    <property type="nucleotide sequence ID" value="XM_017592610.1"/>
</dbReference>
<dbReference type="FunCoup" id="Q5PQM0">
    <property type="interactions" value="2583"/>
</dbReference>
<dbReference type="STRING" id="10116.ENSRNOP00000069933"/>
<dbReference type="GlyCosmos" id="Q5PQM0">
    <property type="glycosylation" value="4 sites, No reported glycans"/>
</dbReference>
<dbReference type="GlyGen" id="Q5PQM0">
    <property type="glycosylation" value="4 sites"/>
</dbReference>
<dbReference type="iPTMnet" id="Q5PQM0"/>
<dbReference type="PhosphoSitePlus" id="Q5PQM0"/>
<dbReference type="PaxDb" id="10116-ENSRNOP00000009450"/>
<dbReference type="Ensembl" id="ENSRNOT00000084531.2">
    <property type="protein sequence ID" value="ENSRNOP00000069933.2"/>
    <property type="gene ID" value="ENSRNOG00000057290.2"/>
</dbReference>
<dbReference type="GeneID" id="312135"/>
<dbReference type="KEGG" id="rno:312135"/>
<dbReference type="UCSC" id="RGD:1307778">
    <property type="organism name" value="rat"/>
</dbReference>
<dbReference type="AGR" id="RGD:1307778"/>
<dbReference type="CTD" id="64418"/>
<dbReference type="RGD" id="1307778">
    <property type="gene designation" value="Tmem168"/>
</dbReference>
<dbReference type="eggNOG" id="ENOG502QRB6">
    <property type="taxonomic scope" value="Eukaryota"/>
</dbReference>
<dbReference type="GeneTree" id="ENSGT00390000005941"/>
<dbReference type="InParanoid" id="Q5PQM0"/>
<dbReference type="OMA" id="VNDQYIA"/>
<dbReference type="OrthoDB" id="5967342at2759"/>
<dbReference type="PhylomeDB" id="Q5PQM0"/>
<dbReference type="TreeFam" id="TF328518"/>
<dbReference type="PRO" id="PR:Q5PQM0"/>
<dbReference type="Proteomes" id="UP000002494">
    <property type="component" value="Chromosome 4"/>
</dbReference>
<dbReference type="GO" id="GO:0031965">
    <property type="term" value="C:nuclear membrane"/>
    <property type="evidence" value="ECO:0000250"/>
    <property type="project" value="UniProtKB"/>
</dbReference>
<dbReference type="GO" id="GO:0017080">
    <property type="term" value="F:sodium channel regulator activity"/>
    <property type="evidence" value="ECO:0000250"/>
    <property type="project" value="UniProtKB"/>
</dbReference>
<dbReference type="GO" id="GO:2000058">
    <property type="term" value="P:regulation of ubiquitin-dependent protein catabolic process"/>
    <property type="evidence" value="ECO:0000266"/>
    <property type="project" value="RGD"/>
</dbReference>
<dbReference type="CDD" id="cd21494">
    <property type="entry name" value="TMEM168"/>
    <property type="match status" value="1"/>
</dbReference>
<dbReference type="InterPro" id="IPR029713">
    <property type="entry name" value="TMEM168"/>
</dbReference>
<dbReference type="PANTHER" id="PTHR14437">
    <property type="entry name" value="TRANSMEMBRANE PROTEIN 168"/>
    <property type="match status" value="1"/>
</dbReference>
<dbReference type="PANTHER" id="PTHR14437:SF2">
    <property type="entry name" value="TRANSMEMBRANE PROTEIN 168"/>
    <property type="match status" value="1"/>
</dbReference>
<keyword id="KW-0903">Direct protein sequencing</keyword>
<keyword id="KW-0325">Glycoprotein</keyword>
<keyword id="KW-0472">Membrane</keyword>
<keyword id="KW-0539">Nucleus</keyword>
<keyword id="KW-1185">Reference proteome</keyword>
<keyword id="KW-0812">Transmembrane</keyword>
<keyword id="KW-1133">Transmembrane helix</keyword>
<organism>
    <name type="scientific">Rattus norvegicus</name>
    <name type="common">Rat</name>
    <dbReference type="NCBI Taxonomy" id="10116"/>
    <lineage>
        <taxon>Eukaryota</taxon>
        <taxon>Metazoa</taxon>
        <taxon>Chordata</taxon>
        <taxon>Craniata</taxon>
        <taxon>Vertebrata</taxon>
        <taxon>Euteleostomi</taxon>
        <taxon>Mammalia</taxon>
        <taxon>Eutheria</taxon>
        <taxon>Euarchontoglires</taxon>
        <taxon>Glires</taxon>
        <taxon>Rodentia</taxon>
        <taxon>Myomorpha</taxon>
        <taxon>Muroidea</taxon>
        <taxon>Muridae</taxon>
        <taxon>Murinae</taxon>
        <taxon>Rattus</taxon>
    </lineage>
</organism>
<name>TM168_RAT</name>
<feature type="chain" id="PRO_0000284633" description="Transmembrane protein 168">
    <location>
        <begin position="1"/>
        <end position="697"/>
    </location>
</feature>
<feature type="transmembrane region" description="Helical" evidence="3">
    <location>
        <begin position="36"/>
        <end position="56"/>
    </location>
</feature>
<feature type="transmembrane region" description="Helical" evidence="3">
    <location>
        <begin position="63"/>
        <end position="83"/>
    </location>
</feature>
<feature type="transmembrane region" description="Helical" evidence="3">
    <location>
        <begin position="89"/>
        <end position="109"/>
    </location>
</feature>
<feature type="transmembrane region" description="Helical" evidence="3">
    <location>
        <begin position="172"/>
        <end position="192"/>
    </location>
</feature>
<feature type="transmembrane region" description="Helical" evidence="3">
    <location>
        <begin position="199"/>
        <end position="219"/>
    </location>
</feature>
<feature type="transmembrane region" description="Helical" evidence="3">
    <location>
        <begin position="223"/>
        <end position="243"/>
    </location>
</feature>
<feature type="transmembrane region" description="Helical" evidence="3">
    <location>
        <begin position="265"/>
        <end position="285"/>
    </location>
</feature>
<feature type="transmembrane region" description="Helical" evidence="3">
    <location>
        <begin position="293"/>
        <end position="313"/>
    </location>
</feature>
<feature type="transmembrane region" description="Helical" evidence="3">
    <location>
        <begin position="352"/>
        <end position="372"/>
    </location>
</feature>
<feature type="transmembrane region" description="Helical" evidence="3">
    <location>
        <begin position="380"/>
        <end position="400"/>
    </location>
</feature>
<feature type="transmembrane region" description="Helical" evidence="3">
    <location>
        <begin position="646"/>
        <end position="666"/>
    </location>
</feature>
<feature type="glycosylation site" description="N-linked (GlcNAc...) asparagine" evidence="3">
    <location>
        <position position="111"/>
    </location>
</feature>
<feature type="glycosylation site" description="N-linked (GlcNAc...) asparagine" evidence="3">
    <location>
        <position position="337"/>
    </location>
</feature>
<feature type="glycosylation site" description="N-linked (GlcNAc...) asparagine" evidence="3">
    <location>
        <position position="533"/>
    </location>
</feature>
<feature type="glycosylation site" description="N-linked (GlcNAc...) asparagine" evidence="3">
    <location>
        <position position="598"/>
    </location>
</feature>
<evidence type="ECO:0000250" key="1">
    <source>
        <dbReference type="UniProtKB" id="Q91VX9"/>
    </source>
</evidence>
<evidence type="ECO:0000250" key="2">
    <source>
        <dbReference type="UniProtKB" id="Q9H0V1"/>
    </source>
</evidence>
<evidence type="ECO:0000255" key="3"/>
<evidence type="ECO:0000305" key="4"/>
<gene>
    <name type="primary">Tmem168</name>
</gene>
<reference key="1">
    <citation type="journal article" date="2004" name="Genome Res.">
        <title>The status, quality, and expansion of the NIH full-length cDNA project: the Mammalian Gene Collection (MGC).</title>
        <authorList>
            <consortium name="The MGC Project Team"/>
        </authorList>
    </citation>
    <scope>NUCLEOTIDE SEQUENCE [LARGE SCALE MRNA]</scope>
    <source>
        <tissue>Kidney</tissue>
    </source>
</reference>
<reference key="2">
    <citation type="submission" date="2007-07" db="UniProtKB">
        <authorList>
            <person name="Lubec G."/>
            <person name="Kang S.U."/>
        </authorList>
    </citation>
    <scope>PROTEIN SEQUENCE OF 125-134</scope>
    <scope>IDENTIFICATION BY MASS SPECTROMETRY</scope>
    <source>
        <strain>Sprague-Dawley</strain>
        <tissue>Brain</tissue>
    </source>
</reference>
<comment type="function">
    <text evidence="1">Plays a key role in maintaining the cardiac electrical stability by modulating cell surface expression of SCN5A. May play a role i the modulation of anxiety behavior by regulating GABAergic neuronal system in the nucleus accumbens.</text>
</comment>
<comment type="subcellular location">
    <subcellularLocation>
        <location evidence="2">Nucleus membrane</location>
        <topology evidence="3">Multi-pass membrane protein</topology>
    </subcellularLocation>
</comment>
<comment type="similarity">
    <text evidence="4">Belongs to the TMEM168 family.</text>
</comment>
<proteinExistence type="evidence at protein level"/>